<keyword id="KW-0963">Cytoplasm</keyword>
<keyword id="KW-0520">NAD</keyword>
<keyword id="KW-0521">NADP</keyword>
<keyword id="KW-0560">Oxidoreductase</keyword>
<keyword id="KW-1185">Reference proteome</keyword>
<feature type="chain" id="PRO_0000348389" description="Glyoxylate/hydroxypyruvate reductase B">
    <location>
        <begin position="1"/>
        <end position="324"/>
    </location>
</feature>
<feature type="active site" evidence="1">
    <location>
        <position position="237"/>
    </location>
</feature>
<feature type="active site" evidence="1">
    <location>
        <position position="266"/>
    </location>
</feature>
<feature type="active site" description="Proton donor" evidence="1">
    <location>
        <position position="285"/>
    </location>
</feature>
<dbReference type="EC" id="1.1.1.79" evidence="1"/>
<dbReference type="EC" id="1.1.1.81" evidence="1"/>
<dbReference type="EMBL" id="AE014075">
    <property type="protein sequence ID" value="AAN82808.1"/>
    <property type="status" value="ALT_INIT"/>
    <property type="molecule type" value="Genomic_DNA"/>
</dbReference>
<dbReference type="RefSeq" id="WP_000805032.1">
    <property type="nucleotide sequence ID" value="NZ_CP051263.1"/>
</dbReference>
<dbReference type="SMR" id="Q8FCF1"/>
<dbReference type="STRING" id="199310.c4372"/>
<dbReference type="KEGG" id="ecc:c4372"/>
<dbReference type="eggNOG" id="COG1052">
    <property type="taxonomic scope" value="Bacteria"/>
</dbReference>
<dbReference type="HOGENOM" id="CLU_019796_1_2_6"/>
<dbReference type="Proteomes" id="UP000001410">
    <property type="component" value="Chromosome"/>
</dbReference>
<dbReference type="GO" id="GO:0005829">
    <property type="term" value="C:cytosol"/>
    <property type="evidence" value="ECO:0007669"/>
    <property type="project" value="TreeGrafter"/>
</dbReference>
<dbReference type="GO" id="GO:0005886">
    <property type="term" value="C:plasma membrane"/>
    <property type="evidence" value="ECO:0007669"/>
    <property type="project" value="UniProtKB-UniRule"/>
</dbReference>
<dbReference type="GO" id="GO:0030267">
    <property type="term" value="F:glyoxylate reductase (NADPH) activity"/>
    <property type="evidence" value="ECO:0007669"/>
    <property type="project" value="UniProtKB-UniRule"/>
</dbReference>
<dbReference type="GO" id="GO:0008465">
    <property type="term" value="F:hydroxypyruvate reductase (NADH) activity"/>
    <property type="evidence" value="ECO:0007669"/>
    <property type="project" value="RHEA"/>
</dbReference>
<dbReference type="GO" id="GO:0120509">
    <property type="term" value="F:hydroxypyruvate reductase (NADPH) activity"/>
    <property type="evidence" value="ECO:0007669"/>
    <property type="project" value="RHEA"/>
</dbReference>
<dbReference type="GO" id="GO:0051287">
    <property type="term" value="F:NAD binding"/>
    <property type="evidence" value="ECO:0007669"/>
    <property type="project" value="InterPro"/>
</dbReference>
<dbReference type="CDD" id="cd05301">
    <property type="entry name" value="GDH"/>
    <property type="match status" value="1"/>
</dbReference>
<dbReference type="FunFam" id="3.40.50.720:FF:000026">
    <property type="entry name" value="Glyoxylate/hydroxypyruvate reductase B"/>
    <property type="match status" value="1"/>
</dbReference>
<dbReference type="Gene3D" id="3.40.50.720">
    <property type="entry name" value="NAD(P)-binding Rossmann-like Domain"/>
    <property type="match status" value="2"/>
</dbReference>
<dbReference type="HAMAP" id="MF_01667">
    <property type="entry name" value="2_Hacid_dh_C_GhrB"/>
    <property type="match status" value="1"/>
</dbReference>
<dbReference type="InterPro" id="IPR050223">
    <property type="entry name" value="D-isomer_2-hydroxyacid_DH"/>
</dbReference>
<dbReference type="InterPro" id="IPR006139">
    <property type="entry name" value="D-isomer_2_OHA_DH_cat_dom"/>
</dbReference>
<dbReference type="InterPro" id="IPR029753">
    <property type="entry name" value="D-isomer_DH_CS"/>
</dbReference>
<dbReference type="InterPro" id="IPR006140">
    <property type="entry name" value="D-isomer_DH_NAD-bd"/>
</dbReference>
<dbReference type="InterPro" id="IPR023756">
    <property type="entry name" value="Glyo/OHPyrv_Rdtase_B"/>
</dbReference>
<dbReference type="InterPro" id="IPR036291">
    <property type="entry name" value="NAD(P)-bd_dom_sf"/>
</dbReference>
<dbReference type="NCBIfam" id="NF011938">
    <property type="entry name" value="PRK15409.1"/>
    <property type="match status" value="1"/>
</dbReference>
<dbReference type="PANTHER" id="PTHR10996">
    <property type="entry name" value="2-HYDROXYACID DEHYDROGENASE-RELATED"/>
    <property type="match status" value="1"/>
</dbReference>
<dbReference type="PANTHER" id="PTHR10996:SF283">
    <property type="entry name" value="GLYOXYLATE_HYDROXYPYRUVATE REDUCTASE B"/>
    <property type="match status" value="1"/>
</dbReference>
<dbReference type="Pfam" id="PF00389">
    <property type="entry name" value="2-Hacid_dh"/>
    <property type="match status" value="1"/>
</dbReference>
<dbReference type="Pfam" id="PF02826">
    <property type="entry name" value="2-Hacid_dh_C"/>
    <property type="match status" value="1"/>
</dbReference>
<dbReference type="SUPFAM" id="SSF52283">
    <property type="entry name" value="Formate/glycerate dehydrogenase catalytic domain-like"/>
    <property type="match status" value="1"/>
</dbReference>
<dbReference type="SUPFAM" id="SSF51735">
    <property type="entry name" value="NAD(P)-binding Rossmann-fold domains"/>
    <property type="match status" value="1"/>
</dbReference>
<dbReference type="PROSITE" id="PS00670">
    <property type="entry name" value="D_2_HYDROXYACID_DH_2"/>
    <property type="match status" value="1"/>
</dbReference>
<dbReference type="PROSITE" id="PS00671">
    <property type="entry name" value="D_2_HYDROXYACID_DH_3"/>
    <property type="match status" value="1"/>
</dbReference>
<organism>
    <name type="scientific">Escherichia coli O6:H1 (strain CFT073 / ATCC 700928 / UPEC)</name>
    <dbReference type="NCBI Taxonomy" id="199310"/>
    <lineage>
        <taxon>Bacteria</taxon>
        <taxon>Pseudomonadati</taxon>
        <taxon>Pseudomonadota</taxon>
        <taxon>Gammaproteobacteria</taxon>
        <taxon>Enterobacterales</taxon>
        <taxon>Enterobacteriaceae</taxon>
        <taxon>Escherichia</taxon>
    </lineage>
</organism>
<accession>Q8FCF1</accession>
<comment type="function">
    <text evidence="1">Catalyzes the NADPH-dependent reduction of glyoxylate and hydroxypyruvate into glycolate and glycerate, respectively.</text>
</comment>
<comment type="catalytic activity">
    <reaction evidence="1">
        <text>glycolate + NADP(+) = glyoxylate + NADPH + H(+)</text>
        <dbReference type="Rhea" id="RHEA:10992"/>
        <dbReference type="ChEBI" id="CHEBI:15378"/>
        <dbReference type="ChEBI" id="CHEBI:29805"/>
        <dbReference type="ChEBI" id="CHEBI:36655"/>
        <dbReference type="ChEBI" id="CHEBI:57783"/>
        <dbReference type="ChEBI" id="CHEBI:58349"/>
        <dbReference type="EC" id="1.1.1.79"/>
    </reaction>
</comment>
<comment type="catalytic activity">
    <reaction evidence="1">
        <text>(R)-glycerate + NAD(+) = 3-hydroxypyruvate + NADH + H(+)</text>
        <dbReference type="Rhea" id="RHEA:17905"/>
        <dbReference type="ChEBI" id="CHEBI:15378"/>
        <dbReference type="ChEBI" id="CHEBI:16659"/>
        <dbReference type="ChEBI" id="CHEBI:17180"/>
        <dbReference type="ChEBI" id="CHEBI:57540"/>
        <dbReference type="ChEBI" id="CHEBI:57945"/>
        <dbReference type="EC" id="1.1.1.81"/>
    </reaction>
</comment>
<comment type="catalytic activity">
    <reaction evidence="1">
        <text>(R)-glycerate + NADP(+) = 3-hydroxypyruvate + NADPH + H(+)</text>
        <dbReference type="Rhea" id="RHEA:18657"/>
        <dbReference type="ChEBI" id="CHEBI:15378"/>
        <dbReference type="ChEBI" id="CHEBI:16659"/>
        <dbReference type="ChEBI" id="CHEBI:17180"/>
        <dbReference type="ChEBI" id="CHEBI:57783"/>
        <dbReference type="ChEBI" id="CHEBI:58349"/>
        <dbReference type="EC" id="1.1.1.81"/>
    </reaction>
</comment>
<comment type="subunit">
    <text evidence="1">Homodimer.</text>
</comment>
<comment type="subcellular location">
    <subcellularLocation>
        <location evidence="1">Cytoplasm</location>
    </subcellularLocation>
</comment>
<comment type="similarity">
    <text evidence="1">Belongs to the D-isomer specific 2-hydroxyacid dehydrogenase family. GhrB subfamily.</text>
</comment>
<comment type="sequence caution" evidence="2">
    <conflict type="erroneous initiation">
        <sequence resource="EMBL-CDS" id="AAN82808"/>
    </conflict>
</comment>
<evidence type="ECO:0000255" key="1">
    <source>
        <dbReference type="HAMAP-Rule" id="MF_01667"/>
    </source>
</evidence>
<evidence type="ECO:0000305" key="2"/>
<proteinExistence type="inferred from homology"/>
<reference key="1">
    <citation type="journal article" date="2002" name="Proc. Natl. Acad. Sci. U.S.A.">
        <title>Extensive mosaic structure revealed by the complete genome sequence of uropathogenic Escherichia coli.</title>
        <authorList>
            <person name="Welch R.A."/>
            <person name="Burland V."/>
            <person name="Plunkett G. III"/>
            <person name="Redford P."/>
            <person name="Roesch P."/>
            <person name="Rasko D."/>
            <person name="Buckles E.L."/>
            <person name="Liou S.-R."/>
            <person name="Boutin A."/>
            <person name="Hackett J."/>
            <person name="Stroud D."/>
            <person name="Mayhew G.F."/>
            <person name="Rose D.J."/>
            <person name="Zhou S."/>
            <person name="Schwartz D.C."/>
            <person name="Perna N.T."/>
            <person name="Mobley H.L.T."/>
            <person name="Donnenberg M.S."/>
            <person name="Blattner F.R."/>
        </authorList>
    </citation>
    <scope>NUCLEOTIDE SEQUENCE [LARGE SCALE GENOMIC DNA]</scope>
    <source>
        <strain>CFT073 / ATCC 700928 / UPEC</strain>
    </source>
</reference>
<gene>
    <name evidence="1" type="primary">ghrB</name>
    <name type="ordered locus">c4372</name>
</gene>
<name>GHRB_ECOL6</name>
<protein>
    <recommendedName>
        <fullName evidence="1">Glyoxylate/hydroxypyruvate reductase B</fullName>
        <ecNumber evidence="1">1.1.1.79</ecNumber>
        <ecNumber evidence="1">1.1.1.81</ecNumber>
    </recommendedName>
</protein>
<sequence>MKPSVILYKALPDDLLQRLQEHFTVHQVANLSPQTVEQNAAIFAEAEGLLGSNENVDAALLEKMPKLRATSTISVGYDNFDVDALTARKILLMHTPTVLTETVADTLMALVLSTARRVVEVAERVKAGEWTASIGPDWYGTDVHHKTLGIVGMGRIGMALAQRAHFGFNMPILYNARRHHKEAEERFNARYCNLDTLLQESDFVCLILPLTDETHHLFGAEQFAKMKSSAIFINAGRGPVVDENALIAALQKGEIHAAGLDVFEQEPLSVDSPLLSMANVVAVPHIGSATHETRYGMAACAVDNLIDALQGKVEKNCVNPHVAD</sequence>